<dbReference type="EMBL" id="BA000001">
    <property type="protein sequence ID" value="BAA31125.1"/>
    <property type="status" value="ALT_INIT"/>
    <property type="molecule type" value="Genomic_DNA"/>
</dbReference>
<dbReference type="PIR" id="F71216">
    <property type="entry name" value="F71216"/>
</dbReference>
<dbReference type="RefSeq" id="WP_010886059.1">
    <property type="nucleotide sequence ID" value="NC_000961.1"/>
</dbReference>
<dbReference type="PDB" id="3A1Y">
    <property type="method" value="X-ray"/>
    <property type="resolution" value="2.13 A"/>
    <property type="chains" value="A/B/C/D/E/F=1-58"/>
</dbReference>
<dbReference type="PDB" id="3WY9">
    <property type="method" value="X-ray"/>
    <property type="resolution" value="2.30 A"/>
    <property type="chains" value="C/D=77-108"/>
</dbReference>
<dbReference type="PDB" id="5H7L">
    <property type="method" value="X-ray"/>
    <property type="resolution" value="3.10 A"/>
    <property type="chains" value="E/G=98-108"/>
</dbReference>
<dbReference type="PDBsum" id="3A1Y"/>
<dbReference type="PDBsum" id="3WY9"/>
<dbReference type="PDBsum" id="5H7L"/>
<dbReference type="SMR" id="O57705"/>
<dbReference type="STRING" id="70601.gene:9379012"/>
<dbReference type="EnsemblBacteria" id="BAA31125">
    <property type="protein sequence ID" value="BAA31125"/>
    <property type="gene ID" value="BAA31125"/>
</dbReference>
<dbReference type="GeneID" id="1442841"/>
<dbReference type="KEGG" id="pho:PH1998"/>
<dbReference type="eggNOG" id="arCOG04287">
    <property type="taxonomic scope" value="Archaea"/>
</dbReference>
<dbReference type="OrthoDB" id="3337at2157"/>
<dbReference type="EvolutionaryTrace" id="O57705"/>
<dbReference type="Proteomes" id="UP000000752">
    <property type="component" value="Chromosome"/>
</dbReference>
<dbReference type="GO" id="GO:1990904">
    <property type="term" value="C:ribonucleoprotein complex"/>
    <property type="evidence" value="ECO:0007669"/>
    <property type="project" value="UniProtKB-KW"/>
</dbReference>
<dbReference type="GO" id="GO:0005840">
    <property type="term" value="C:ribosome"/>
    <property type="evidence" value="ECO:0007669"/>
    <property type="project" value="UniProtKB-KW"/>
</dbReference>
<dbReference type="GO" id="GO:0003735">
    <property type="term" value="F:structural constituent of ribosome"/>
    <property type="evidence" value="ECO:0007669"/>
    <property type="project" value="InterPro"/>
</dbReference>
<dbReference type="GO" id="GO:0006414">
    <property type="term" value="P:translational elongation"/>
    <property type="evidence" value="ECO:0007669"/>
    <property type="project" value="InterPro"/>
</dbReference>
<dbReference type="CDD" id="cd05832">
    <property type="entry name" value="Ribosomal_L12p"/>
    <property type="match status" value="1"/>
</dbReference>
<dbReference type="FunFam" id="1.10.10.1410:FF:000002">
    <property type="entry name" value="60S acidic ribosomal protein P2"/>
    <property type="match status" value="1"/>
</dbReference>
<dbReference type="Gene3D" id="1.10.10.1410">
    <property type="match status" value="1"/>
</dbReference>
<dbReference type="HAMAP" id="MF_01478">
    <property type="entry name" value="Ribosomal_L12_arch"/>
    <property type="match status" value="1"/>
</dbReference>
<dbReference type="InterPro" id="IPR038716">
    <property type="entry name" value="P1/P2_N_sf"/>
</dbReference>
<dbReference type="InterPro" id="IPR027534">
    <property type="entry name" value="Ribosomal_P1/P2"/>
</dbReference>
<dbReference type="InterPro" id="IPR022295">
    <property type="entry name" value="Ribosomal_P1_arc"/>
</dbReference>
<dbReference type="NCBIfam" id="TIGR03685">
    <property type="entry name" value="ribo_P1_arch"/>
    <property type="match status" value="1"/>
</dbReference>
<dbReference type="PANTHER" id="PTHR45696">
    <property type="entry name" value="60S ACIDIC RIBOSOMAL PROTEIN P1"/>
    <property type="match status" value="1"/>
</dbReference>
<dbReference type="PANTHER" id="PTHR45696:SF10">
    <property type="entry name" value="LARGE RIBOSOMAL SUBUNIT PROTEIN P1"/>
    <property type="match status" value="1"/>
</dbReference>
<dbReference type="Pfam" id="PF00428">
    <property type="entry name" value="Ribosomal_60s"/>
    <property type="match status" value="1"/>
</dbReference>
<sequence>MEYVYAALLLHSVGKEINEENLKAVLQAAGVEPEEARIKALVAALEGVNIDEVIEKAAMPVAVAAAPAAAPAEAGGEEKKEEEKKEEEEKEEEVSEEEALAGLSALFG</sequence>
<comment type="function">
    <text evidence="1 3">Forms part of the ribosomal stalk, playing a central role in the interaction of the ribosome with GTP-bound translation factors. The stalk complex of P.horikoshii binds to E.coli large subunits and confers on them the ability to interact with eukaryotic elongation factors. Each succesive P1 dimer bound along the P0 spine increases the GTPase activity of elongation factors and increases translation by reconsituted ribosomes.</text>
</comment>
<comment type="subunit">
    <text evidence="3 4">Part of the 50S ribosomal subunit. Homodimer, it forms part of the ribosomal stalk which helps the ribosome interact with GTP-bound translation factors. Forms a heptameric uL10/P0(P1)2(P1)2(P1)2 complex, where uL10/P0 forms an elongated spine to which the P1 dimers bind in a sequential fashion.</text>
</comment>
<comment type="similarity">
    <text evidence="1">Belongs to the eukaryotic ribosomal protein P1/P2 family.</text>
</comment>
<comment type="sequence caution" evidence="5">
    <conflict type="erroneous initiation">
        <sequence resource="EMBL-CDS" id="BAA31125"/>
    </conflict>
    <text>Extended N-terminus.</text>
</comment>
<keyword id="KW-0002">3D-structure</keyword>
<keyword id="KW-0687">Ribonucleoprotein</keyword>
<keyword id="KW-0689">Ribosomal protein</keyword>
<gene>
    <name evidence="1" type="primary">rpl12</name>
    <name type="ordered locus">PH1998</name>
</gene>
<reference key="1">
    <citation type="journal article" date="1998" name="DNA Res.">
        <title>Complete sequence and gene organization of the genome of a hyper-thermophilic archaebacterium, Pyrococcus horikoshii OT3.</title>
        <authorList>
            <person name="Kawarabayasi Y."/>
            <person name="Sawada M."/>
            <person name="Horikawa H."/>
            <person name="Haikawa Y."/>
            <person name="Hino Y."/>
            <person name="Yamamoto S."/>
            <person name="Sekine M."/>
            <person name="Baba S."/>
            <person name="Kosugi H."/>
            <person name="Hosoyama A."/>
            <person name="Nagai Y."/>
            <person name="Sakai M."/>
            <person name="Ogura K."/>
            <person name="Otsuka R."/>
            <person name="Nakazawa H."/>
            <person name="Takamiya M."/>
            <person name="Ohfuku Y."/>
            <person name="Funahashi T."/>
            <person name="Tanaka T."/>
            <person name="Kudoh Y."/>
            <person name="Yamazaki J."/>
            <person name="Kushida N."/>
            <person name="Oguchi A."/>
            <person name="Aoki K."/>
            <person name="Yoshizawa T."/>
            <person name="Nakamura Y."/>
            <person name="Robb F.T."/>
            <person name="Horikoshi K."/>
            <person name="Masuchi Y."/>
            <person name="Shizuya H."/>
            <person name="Kikuchi H."/>
        </authorList>
    </citation>
    <scope>NUCLEOTIDE SEQUENCE [LARGE SCALE GENOMIC DNA]</scope>
    <source>
        <strain>ATCC 700860 / DSM 12428 / JCM 9974 / NBRC 100139 / OT-3</strain>
    </source>
</reference>
<reference key="2">
    <citation type="journal article" date="2007" name="J. Biol. Chem.">
        <title>Three binding sites for stalk protein dimers are generally present in ribosomes from archaeal organism.</title>
        <authorList>
            <person name="Maki Y."/>
            <person name="Hashimoto T."/>
            <person name="Zhou M."/>
            <person name="Naganuma T."/>
            <person name="Ohta J."/>
            <person name="Nomura T."/>
            <person name="Robinson C.V."/>
            <person name="Uchiumi T."/>
        </authorList>
    </citation>
    <scope>FUNCTION</scope>
    <scope>SUBUNIT</scope>
</reference>
<reference key="3">
    <citation type="journal article" date="2010" name="J. Biol. Chem.">
        <title>Structural basis for translation factor recruitment to the eukaryotic/archaeal ribosomes.</title>
        <authorList>
            <person name="Naganuma T."/>
            <person name="Nomura N."/>
            <person name="Yao M."/>
            <person name="Mochizuki M."/>
            <person name="Uchiumi T."/>
            <person name="Tanaka I."/>
        </authorList>
    </citation>
    <scope>X-RAY CRYSTALLOGRAPHY (2.13 ANGSTROMS) OF 1-58</scope>
    <scope>SUBUNIT</scope>
</reference>
<organism>
    <name type="scientific">Pyrococcus horikoshii (strain ATCC 700860 / DSM 12428 / JCM 9974 / NBRC 100139 / OT-3)</name>
    <dbReference type="NCBI Taxonomy" id="70601"/>
    <lineage>
        <taxon>Archaea</taxon>
        <taxon>Methanobacteriati</taxon>
        <taxon>Methanobacteriota</taxon>
        <taxon>Thermococci</taxon>
        <taxon>Thermococcales</taxon>
        <taxon>Thermococcaceae</taxon>
        <taxon>Pyrococcus</taxon>
    </lineage>
</organism>
<protein>
    <recommendedName>
        <fullName evidence="1">Large ribosomal subunit protein P1</fullName>
    </recommendedName>
    <alternativeName>
        <fullName evidence="1">50S ribosomal protein L12</fullName>
    </alternativeName>
    <alternativeName>
        <fullName>Acidic ribosomal protein P1 homolog</fullName>
    </alternativeName>
</protein>
<proteinExistence type="evidence at protein level"/>
<feature type="chain" id="PRO_0000157635" description="Large ribosomal subunit protein P1">
    <location>
        <begin position="1"/>
        <end position="108"/>
    </location>
</feature>
<feature type="region of interest" description="Disordered" evidence="2">
    <location>
        <begin position="67"/>
        <end position="108"/>
    </location>
</feature>
<feature type="compositionally biased region" description="Acidic residues" evidence="2">
    <location>
        <begin position="84"/>
        <end position="99"/>
    </location>
</feature>
<feature type="helix" evidence="6">
    <location>
        <begin position="2"/>
        <end position="12"/>
    </location>
</feature>
<feature type="helix" evidence="6">
    <location>
        <begin position="19"/>
        <end position="28"/>
    </location>
</feature>
<feature type="helix" evidence="6">
    <location>
        <begin position="35"/>
        <end position="45"/>
    </location>
</feature>
<feature type="helix" evidence="6">
    <location>
        <begin position="50"/>
        <end position="57"/>
    </location>
</feature>
<feature type="helix" evidence="7">
    <location>
        <begin position="84"/>
        <end position="106"/>
    </location>
</feature>
<accession>O57705</accession>
<evidence type="ECO:0000255" key="1">
    <source>
        <dbReference type="HAMAP-Rule" id="MF_01478"/>
    </source>
</evidence>
<evidence type="ECO:0000256" key="2">
    <source>
        <dbReference type="SAM" id="MobiDB-lite"/>
    </source>
</evidence>
<evidence type="ECO:0000269" key="3">
    <source>
    </source>
</evidence>
<evidence type="ECO:0000269" key="4">
    <source>
    </source>
</evidence>
<evidence type="ECO:0000305" key="5"/>
<evidence type="ECO:0007829" key="6">
    <source>
        <dbReference type="PDB" id="3A1Y"/>
    </source>
</evidence>
<evidence type="ECO:0007829" key="7">
    <source>
        <dbReference type="PDB" id="3WY9"/>
    </source>
</evidence>
<name>RL12_PYRHO</name>